<protein>
    <recommendedName>
        <fullName>Rab11 family-interacting protein 4B</fullName>
        <shortName>FIP4-Rab11-B</shortName>
        <shortName>Rab11-FIP4-B</shortName>
    </recommendedName>
</protein>
<dbReference type="EMBL" id="BC162520">
    <property type="protein sequence ID" value="AAI62520.1"/>
    <property type="molecule type" value="mRNA"/>
</dbReference>
<dbReference type="RefSeq" id="NP_001122297.1">
    <property type="nucleotide sequence ID" value="NM_001128825.1"/>
</dbReference>
<dbReference type="RefSeq" id="XP_068077705.1">
    <property type="nucleotide sequence ID" value="XM_068221604.1"/>
</dbReference>
<dbReference type="SMR" id="B3DGU2"/>
<dbReference type="FunCoup" id="B3DGU2">
    <property type="interactions" value="377"/>
</dbReference>
<dbReference type="STRING" id="7955.ENSDARP00000132572"/>
<dbReference type="PaxDb" id="7955-ENSDARP00000125009"/>
<dbReference type="Ensembl" id="ENSDART00000159747">
    <property type="protein sequence ID" value="ENSDARP00000132572"/>
    <property type="gene ID" value="ENSDARG00000103207"/>
</dbReference>
<dbReference type="Ensembl" id="ENSDART00000167798">
    <property type="protein sequence ID" value="ENSDARP00000135008"/>
    <property type="gene ID" value="ENSDARG00000103207"/>
</dbReference>
<dbReference type="Ensembl" id="ENSDART00000171097">
    <property type="protein sequence ID" value="ENSDARP00000139004"/>
    <property type="gene ID" value="ENSDARG00000103207"/>
</dbReference>
<dbReference type="GeneID" id="100151129"/>
<dbReference type="KEGG" id="dre:100151129"/>
<dbReference type="AGR" id="ZFIN:ZDB-GENE-080722-8"/>
<dbReference type="CTD" id="100151129"/>
<dbReference type="ZFIN" id="ZDB-GENE-080722-8">
    <property type="gene designation" value="rab11fip4b"/>
</dbReference>
<dbReference type="eggNOG" id="KOG0982">
    <property type="taxonomic scope" value="Eukaryota"/>
</dbReference>
<dbReference type="HOGENOM" id="CLU_018925_1_0_1"/>
<dbReference type="InParanoid" id="B3DGU2"/>
<dbReference type="OMA" id="TSHEDEC"/>
<dbReference type="OrthoDB" id="418358at2759"/>
<dbReference type="PhylomeDB" id="B3DGU2"/>
<dbReference type="TreeFam" id="TF327221"/>
<dbReference type="PRO" id="PR:B3DGU2"/>
<dbReference type="Proteomes" id="UP000000437">
    <property type="component" value="Alternate scaffold 6"/>
</dbReference>
<dbReference type="Proteomes" id="UP000000437">
    <property type="component" value="Chromosome 6"/>
</dbReference>
<dbReference type="Bgee" id="ENSDARG00000103207">
    <property type="expression patterns" value="Expressed in granulocyte and 20 other cell types or tissues"/>
</dbReference>
<dbReference type="GO" id="GO:0032154">
    <property type="term" value="C:cleavage furrow"/>
    <property type="evidence" value="ECO:0000250"/>
    <property type="project" value="UniProtKB"/>
</dbReference>
<dbReference type="GO" id="GO:0030139">
    <property type="term" value="C:endocytic vesicle"/>
    <property type="evidence" value="ECO:0000250"/>
    <property type="project" value="UniProtKB"/>
</dbReference>
<dbReference type="GO" id="GO:0005768">
    <property type="term" value="C:endosome"/>
    <property type="evidence" value="ECO:0000250"/>
    <property type="project" value="UniProtKB"/>
</dbReference>
<dbReference type="GO" id="GO:0030496">
    <property type="term" value="C:midbody"/>
    <property type="evidence" value="ECO:0000250"/>
    <property type="project" value="UniProtKB"/>
</dbReference>
<dbReference type="GO" id="GO:0055038">
    <property type="term" value="C:recycling endosome membrane"/>
    <property type="evidence" value="ECO:0000250"/>
    <property type="project" value="UniProtKB"/>
</dbReference>
<dbReference type="GO" id="GO:0042803">
    <property type="term" value="F:protein homodimerization activity"/>
    <property type="evidence" value="ECO:0000250"/>
    <property type="project" value="UniProtKB"/>
</dbReference>
<dbReference type="GO" id="GO:0031267">
    <property type="term" value="F:small GTPase binding"/>
    <property type="evidence" value="ECO:0000250"/>
    <property type="project" value="UniProtKB"/>
</dbReference>
<dbReference type="GO" id="GO:0051301">
    <property type="term" value="P:cell division"/>
    <property type="evidence" value="ECO:0007669"/>
    <property type="project" value="UniProtKB-KW"/>
</dbReference>
<dbReference type="GO" id="GO:0032456">
    <property type="term" value="P:endocytic recycling"/>
    <property type="evidence" value="ECO:0000318"/>
    <property type="project" value="GO_Central"/>
</dbReference>
<dbReference type="GO" id="GO:0032465">
    <property type="term" value="P:regulation of cytokinesis"/>
    <property type="evidence" value="ECO:0000250"/>
    <property type="project" value="UniProtKB"/>
</dbReference>
<dbReference type="FunFam" id="1.20.5.2440:FF:000001">
    <property type="entry name" value="RAB11 family interacting protein 4"/>
    <property type="match status" value="1"/>
</dbReference>
<dbReference type="Gene3D" id="1.20.5.2440">
    <property type="match status" value="1"/>
</dbReference>
<dbReference type="InterPro" id="IPR037245">
    <property type="entry name" value="FIP-RBD_C_sf"/>
</dbReference>
<dbReference type="InterPro" id="IPR019018">
    <property type="entry name" value="Rab-bd_FIP-RBD"/>
</dbReference>
<dbReference type="InterPro" id="IPR051977">
    <property type="entry name" value="Rab11-interacting_regulator"/>
</dbReference>
<dbReference type="PANTHER" id="PTHR15726:SF5">
    <property type="entry name" value="RAB11 FAMILY-INTERACTING PROTEIN 4"/>
    <property type="match status" value="1"/>
</dbReference>
<dbReference type="PANTHER" id="PTHR15726">
    <property type="entry name" value="RAB11-FAMILY INTERACTING PROTEIN"/>
    <property type="match status" value="1"/>
</dbReference>
<dbReference type="Pfam" id="PF25450">
    <property type="entry name" value="Rab11-FIP3"/>
    <property type="match status" value="1"/>
</dbReference>
<dbReference type="Pfam" id="PF09457">
    <property type="entry name" value="RBD-FIP"/>
    <property type="match status" value="1"/>
</dbReference>
<dbReference type="SUPFAM" id="SSF144270">
    <property type="entry name" value="Eferin C-derminal domain-like"/>
    <property type="match status" value="1"/>
</dbReference>
<dbReference type="PROSITE" id="PS51511">
    <property type="entry name" value="FIP_RBD"/>
    <property type="match status" value="1"/>
</dbReference>
<comment type="function">
    <text evidence="1">Acts as a regulator of endocytic traffic by participating in membrane delivery. Required for the abscission step in cytokinesis, possibly by acting as an 'address tag' delivering recycling endosome membranes to the cleavage furrow during late cytokinesis (By similarity).</text>
</comment>
<comment type="subunit">
    <text evidence="1">Homodimer. Forms a complex with Rab11 (rab11a or rab11b) and arf6 (By similarity).</text>
</comment>
<comment type="subcellular location">
    <subcellularLocation>
        <location evidence="1">Recycling endosome membrane</location>
        <topology evidence="1">Peripheral membrane protein</topology>
    </subcellularLocation>
    <subcellularLocation>
        <location evidence="1">Cleavage furrow</location>
    </subcellularLocation>
    <subcellularLocation>
        <location evidence="1">Midbody</location>
    </subcellularLocation>
    <subcellularLocation>
        <location evidence="1">Cytoplasmic vesicle</location>
    </subcellularLocation>
    <text evidence="1">Recruited to the cleavage furrow and the midbody during cytokinesis.</text>
</comment>
<comment type="domain">
    <text evidence="1">The RBD-FIP domain mediates the interaction with Rab11 (rab11a or rab11b).</text>
</comment>
<accession>B3DGU2</accession>
<evidence type="ECO:0000250" key="1"/>
<evidence type="ECO:0000255" key="2"/>
<evidence type="ECO:0000255" key="3">
    <source>
        <dbReference type="PROSITE-ProRule" id="PRU00844"/>
    </source>
</evidence>
<evidence type="ECO:0000256" key="4">
    <source>
        <dbReference type="SAM" id="MobiDB-lite"/>
    </source>
</evidence>
<feature type="chain" id="PRO_0000390973" description="Rab11 family-interacting protein 4B">
    <location>
        <begin position="1"/>
        <end position="502"/>
    </location>
</feature>
<feature type="domain" description="FIP-RBD" evidence="3">
    <location>
        <begin position="439"/>
        <end position="501"/>
    </location>
</feature>
<feature type="region of interest" description="Disordered" evidence="4">
    <location>
        <begin position="1"/>
        <end position="49"/>
    </location>
</feature>
<feature type="region of interest" description="Disordered" evidence="4">
    <location>
        <begin position="71"/>
        <end position="98"/>
    </location>
</feature>
<feature type="coiled-coil region" evidence="2">
    <location>
        <begin position="228"/>
        <end position="482"/>
    </location>
</feature>
<feature type="compositionally biased region" description="Basic and acidic residues" evidence="4">
    <location>
        <begin position="15"/>
        <end position="29"/>
    </location>
</feature>
<feature type="compositionally biased region" description="Polar residues" evidence="4">
    <location>
        <begin position="71"/>
        <end position="80"/>
    </location>
</feature>
<feature type="compositionally biased region" description="Acidic residues" evidence="4">
    <location>
        <begin position="81"/>
        <end position="93"/>
    </location>
</feature>
<reference key="1">
    <citation type="submission" date="2008-04" db="EMBL/GenBank/DDBJ databases">
        <authorList>
            <consortium name="NIH - Zebrafish Gene Collection (ZGC) project"/>
        </authorList>
    </citation>
    <scope>NUCLEOTIDE SEQUENCE [LARGE SCALE MRNA]</scope>
</reference>
<organism>
    <name type="scientific">Danio rerio</name>
    <name type="common">Zebrafish</name>
    <name type="synonym">Brachydanio rerio</name>
    <dbReference type="NCBI Taxonomy" id="7955"/>
    <lineage>
        <taxon>Eukaryota</taxon>
        <taxon>Metazoa</taxon>
        <taxon>Chordata</taxon>
        <taxon>Craniata</taxon>
        <taxon>Vertebrata</taxon>
        <taxon>Euteleostomi</taxon>
        <taxon>Actinopterygii</taxon>
        <taxon>Neopterygii</taxon>
        <taxon>Teleostei</taxon>
        <taxon>Ostariophysi</taxon>
        <taxon>Cypriniformes</taxon>
        <taxon>Danionidae</taxon>
        <taxon>Danioninae</taxon>
        <taxon>Danio</taxon>
    </lineage>
</organism>
<proteinExistence type="evidence at transcript level"/>
<name>RFP4B_DANRE</name>
<keyword id="KW-0131">Cell cycle</keyword>
<keyword id="KW-0132">Cell division</keyword>
<keyword id="KW-0175">Coiled coil</keyword>
<keyword id="KW-0968">Cytoplasmic vesicle</keyword>
<keyword id="KW-0967">Endosome</keyword>
<keyword id="KW-0472">Membrane</keyword>
<keyword id="KW-1185">Reference proteome</keyword>
<keyword id="KW-0813">Transport</keyword>
<gene>
    <name type="primary">rab11fip4b</name>
</gene>
<sequence>MSIQECPESPMLEGEEGRGVERDSDRDSAVDSASEISDGGRTGEKEEGIGICLPREKGDLMHNHFEISDQSALSSASLNEEQFEDYGEGEDGDCTTSSPCPDDEIRINGCSDLGSSVSSSAGQTPRKIHNVDDQMEVFCSQCCKRVSLLSDLENRLKNLKTSSPNRKISSTAFGRKLLHNSNISSSNGSTEDLFHDSTDSSDLDITEKVSYLDKKVTELENEILMSGDVKTKLKQENIQLVHRIHELEEQLKDQETRAEKIMEDELRRHRDAYIRLEKDKNTQIELLRNRLHQLEDENGKMAMNMNRLKSQTEKLDEEKQRMTDKLEDTSLRLKDEMDLYKKMMDKLRQNRQEFQRERDTMQELIEDLRRELEHLQLYKLEAERAGRGRRSSISLSEYSSRTRESELEQEVRRLKQDNQKLREQNEDLNGQLLSLSLHEAKNLFATQTKAQSLAMEIDHASRDQLLEALKQQEEINLRLRQYMDKIILSILDHNPSILEIKN</sequence>